<proteinExistence type="inferred from homology"/>
<feature type="chain" id="PRO_0000401093" description="RNA silencing suppressor">
    <location>
        <begin position="1"/>
        <end position="90"/>
    </location>
</feature>
<feature type="region of interest" description="Basic">
    <location>
        <begin position="15"/>
        <end position="18"/>
    </location>
</feature>
<reference key="1">
    <citation type="submission" date="2006-02" db="EMBL/GenBank/DDBJ databases">
        <authorList>
            <person name="Minafra A."/>
        </authorList>
    </citation>
    <scope>NUCLEOTIDE SEQUENCE [GENOMIC RNA]</scope>
</reference>
<reference key="2">
    <citation type="journal article" date="2006" name="J. Gen. Virol.">
        <title>Identification of an RNA-silencing suppressor in the genome of Grapevine virus A.</title>
        <authorList>
            <person name="Zhou Z.S."/>
            <person name="Dell'Orco M."/>
            <person name="Saldarelli P."/>
            <person name="Turturo C."/>
            <person name="Minafra A."/>
            <person name="Martelli G.P."/>
        </authorList>
    </citation>
    <scope>FUNCTION</scope>
</reference>
<comment type="function">
    <text evidence="1">Suppressor of viral-induced RNA silencing. The potential mechanism of action is based on sequestering siRNAs.</text>
</comment>
<comment type="similarity">
    <text evidence="2">Belongs to the carlaviruses nucleic acid-binding protein family.</text>
</comment>
<organism>
    <name type="scientific">Grapevine virus A (isolate Is 151)</name>
    <name type="common">GVA</name>
    <dbReference type="NCBI Taxonomy" id="651358"/>
    <lineage>
        <taxon>Viruses</taxon>
        <taxon>Riboviria</taxon>
        <taxon>Orthornavirae</taxon>
        <taxon>Kitrinoviricota</taxon>
        <taxon>Alsuviricetes</taxon>
        <taxon>Tymovirales</taxon>
        <taxon>Betaflexiviridae</taxon>
        <taxon>Trivirinae</taxon>
        <taxon>Vitivirus</taxon>
        <taxon>Grapevine virus A</taxon>
    </lineage>
</organism>
<name>VSR_GVAIS</name>
<protein>
    <recommendedName>
        <fullName>RNA silencing suppressor</fullName>
    </recommendedName>
</protein>
<accession>Q67708</accession>
<evidence type="ECO:0000269" key="1">
    <source>
    </source>
</evidence>
<evidence type="ECO:0000305" key="2"/>
<dbReference type="EMBL" id="X75433">
    <property type="protein sequence ID" value="CAA53186.2"/>
    <property type="molecule type" value="Genomic_RNA"/>
</dbReference>
<dbReference type="PIR" id="S44999">
    <property type="entry name" value="S44999"/>
</dbReference>
<dbReference type="RefSeq" id="NP_619666.2">
    <property type="nucleotide sequence ID" value="NC_003604.2"/>
</dbReference>
<dbReference type="GeneID" id="940185"/>
<dbReference type="KEGG" id="vg:940185"/>
<dbReference type="Proteomes" id="UP000000679">
    <property type="component" value="Segment"/>
</dbReference>
<dbReference type="GO" id="GO:0003723">
    <property type="term" value="F:RNA binding"/>
    <property type="evidence" value="ECO:0007669"/>
    <property type="project" value="UniProtKB-KW"/>
</dbReference>
<dbReference type="GO" id="GO:0052170">
    <property type="term" value="P:symbiont-mediated suppression of host innate immune response"/>
    <property type="evidence" value="ECO:0007669"/>
    <property type="project" value="UniProtKB-KW"/>
</dbReference>
<dbReference type="InterPro" id="IPR008891">
    <property type="entry name" value="Viral_NABP"/>
</dbReference>
<dbReference type="Pfam" id="PF05515">
    <property type="entry name" value="Viral_NABP"/>
    <property type="match status" value="1"/>
</dbReference>
<organismHost>
    <name type="scientific">Vitis vinifera</name>
    <name type="common">Grape</name>
    <dbReference type="NCBI Taxonomy" id="29760"/>
</organismHost>
<sequence length="90" mass="10528">MDDPSFLTGRSTFAKRRRARRMNVCKCGAIMHNNKDCKSSSISSHKLDRLRFVKEGRVALTGETPVYRTWVKWVETEYHIYIVETSDDED</sequence>
<keyword id="KW-0945">Host-virus interaction</keyword>
<keyword id="KW-1090">Inhibition of host innate immune response by virus</keyword>
<keyword id="KW-1185">Reference proteome</keyword>
<keyword id="KW-0694">RNA-binding</keyword>
<keyword id="KW-0941">Suppressor of RNA silencing</keyword>
<keyword id="KW-0899">Viral immunoevasion</keyword>
<gene>
    <name type="primary">ORF5</name>
</gene>